<keyword id="KW-0002">3D-structure</keyword>
<keyword id="KW-0963">Cytoplasm</keyword>
<keyword id="KW-1185">Reference proteome</keyword>
<keyword id="KW-0690">Ribosome biogenesis</keyword>
<organism>
    <name type="scientific">Thermotoga maritima (strain ATCC 43589 / DSM 3109 / JCM 10099 / NBRC 100826 / MSB8)</name>
    <dbReference type="NCBI Taxonomy" id="243274"/>
    <lineage>
        <taxon>Bacteria</taxon>
        <taxon>Thermotogati</taxon>
        <taxon>Thermotogota</taxon>
        <taxon>Thermotogae</taxon>
        <taxon>Thermotogales</taxon>
        <taxon>Thermotogaceae</taxon>
        <taxon>Thermotoga</taxon>
    </lineage>
</organism>
<dbReference type="EMBL" id="AE000512">
    <property type="protein sequence ID" value="AAD35937.1"/>
    <property type="molecule type" value="Genomic_DNA"/>
</dbReference>
<dbReference type="PIR" id="H72324">
    <property type="entry name" value="H72324"/>
</dbReference>
<dbReference type="RefSeq" id="NP_228664.1">
    <property type="nucleotide sequence ID" value="NC_000853.1"/>
</dbReference>
<dbReference type="RefSeq" id="WP_004080768.1">
    <property type="nucleotide sequence ID" value="NZ_CP011107.1"/>
</dbReference>
<dbReference type="PDB" id="2KZF">
    <property type="method" value="NMR"/>
    <property type="chains" value="A=1-105"/>
</dbReference>
<dbReference type="PDBsum" id="2KZF"/>
<dbReference type="BMRB" id="Q9WZV9"/>
<dbReference type="SMR" id="Q9WZV9"/>
<dbReference type="FunCoup" id="Q9WZV9">
    <property type="interactions" value="346"/>
</dbReference>
<dbReference type="STRING" id="243274.TM_0855"/>
<dbReference type="PaxDb" id="243274-THEMA_00360"/>
<dbReference type="EnsemblBacteria" id="AAD35937">
    <property type="protein sequence ID" value="AAD35937"/>
    <property type="gene ID" value="TM_0855"/>
</dbReference>
<dbReference type="KEGG" id="tma:TM0855"/>
<dbReference type="KEGG" id="tmi:THEMA_00360"/>
<dbReference type="KEGG" id="tmm:Tmari_0857"/>
<dbReference type="KEGG" id="tmw:THMA_0877"/>
<dbReference type="eggNOG" id="COG0858">
    <property type="taxonomic scope" value="Bacteria"/>
</dbReference>
<dbReference type="InParanoid" id="Q9WZV9"/>
<dbReference type="OrthoDB" id="46605at2"/>
<dbReference type="EvolutionaryTrace" id="Q9WZV9"/>
<dbReference type="Proteomes" id="UP000008183">
    <property type="component" value="Chromosome"/>
</dbReference>
<dbReference type="GO" id="GO:0005829">
    <property type="term" value="C:cytosol"/>
    <property type="evidence" value="ECO:0000318"/>
    <property type="project" value="GO_Central"/>
</dbReference>
<dbReference type="GO" id="GO:0043024">
    <property type="term" value="F:ribosomal small subunit binding"/>
    <property type="evidence" value="ECO:0000318"/>
    <property type="project" value="GO_Central"/>
</dbReference>
<dbReference type="GO" id="GO:0030490">
    <property type="term" value="P:maturation of SSU-rRNA"/>
    <property type="evidence" value="ECO:0007669"/>
    <property type="project" value="UniProtKB-UniRule"/>
</dbReference>
<dbReference type="GO" id="GO:0042254">
    <property type="term" value="P:ribosome biogenesis"/>
    <property type="evidence" value="ECO:0000318"/>
    <property type="project" value="GO_Central"/>
</dbReference>
<dbReference type="Gene3D" id="3.30.300.20">
    <property type="match status" value="1"/>
</dbReference>
<dbReference type="HAMAP" id="MF_00003">
    <property type="entry name" value="RbfA"/>
    <property type="match status" value="1"/>
</dbReference>
<dbReference type="InterPro" id="IPR015946">
    <property type="entry name" value="KH_dom-like_a/b"/>
</dbReference>
<dbReference type="InterPro" id="IPR000238">
    <property type="entry name" value="RbfA"/>
</dbReference>
<dbReference type="InterPro" id="IPR023799">
    <property type="entry name" value="RbfA_dom_sf"/>
</dbReference>
<dbReference type="InterPro" id="IPR020053">
    <property type="entry name" value="Ribosome-bd_factorA_CS"/>
</dbReference>
<dbReference type="NCBIfam" id="TIGR00082">
    <property type="entry name" value="rbfA"/>
    <property type="match status" value="1"/>
</dbReference>
<dbReference type="PANTHER" id="PTHR33515">
    <property type="entry name" value="RIBOSOME-BINDING FACTOR A, CHLOROPLASTIC-RELATED"/>
    <property type="match status" value="1"/>
</dbReference>
<dbReference type="PANTHER" id="PTHR33515:SF1">
    <property type="entry name" value="RIBOSOME-BINDING FACTOR A, CHLOROPLASTIC-RELATED"/>
    <property type="match status" value="1"/>
</dbReference>
<dbReference type="Pfam" id="PF02033">
    <property type="entry name" value="RBFA"/>
    <property type="match status" value="1"/>
</dbReference>
<dbReference type="SUPFAM" id="SSF89919">
    <property type="entry name" value="Ribosome-binding factor A, RbfA"/>
    <property type="match status" value="1"/>
</dbReference>
<dbReference type="PROSITE" id="PS01319">
    <property type="entry name" value="RBFA"/>
    <property type="match status" value="1"/>
</dbReference>
<reference key="1">
    <citation type="journal article" date="1999" name="Nature">
        <title>Evidence for lateral gene transfer between Archaea and Bacteria from genome sequence of Thermotoga maritima.</title>
        <authorList>
            <person name="Nelson K.E."/>
            <person name="Clayton R.A."/>
            <person name="Gill S.R."/>
            <person name="Gwinn M.L."/>
            <person name="Dodson R.J."/>
            <person name="Haft D.H."/>
            <person name="Hickey E.K."/>
            <person name="Peterson J.D."/>
            <person name="Nelson W.C."/>
            <person name="Ketchum K.A."/>
            <person name="McDonald L.A."/>
            <person name="Utterback T.R."/>
            <person name="Malek J.A."/>
            <person name="Linher K.D."/>
            <person name="Garrett M.M."/>
            <person name="Stewart A.M."/>
            <person name="Cotton M.D."/>
            <person name="Pratt M.S."/>
            <person name="Phillips C.A."/>
            <person name="Richardson D.L."/>
            <person name="Heidelberg J.F."/>
            <person name="Sutton G.G."/>
            <person name="Fleischmann R.D."/>
            <person name="Eisen J.A."/>
            <person name="White O."/>
            <person name="Salzberg S.L."/>
            <person name="Smith H.O."/>
            <person name="Venter J.C."/>
            <person name="Fraser C.M."/>
        </authorList>
    </citation>
    <scope>NUCLEOTIDE SEQUENCE [LARGE SCALE GENOMIC DNA]</scope>
    <source>
        <strain>ATCC 43589 / DSM 3109 / JCM 10099 / NBRC 100826 / MSB8</strain>
    </source>
</reference>
<reference key="2">
    <citation type="journal article" date="2005" name="J. Biomol. NMR">
        <title>NMR assignments of the cold-shock protein ribosome-binding factor A (RbfA) from Thermotoga maritima.</title>
        <authorList>
            <person name="Grimm S.K."/>
            <person name="Woehnert J."/>
        </authorList>
    </citation>
    <scope>NMR ASSIGNMENTS FOR 1-120</scope>
    <source>
        <strain>ATCC 43589 / DSM 3109 / JCM 10099 / NBRC 100826 / MSB8</strain>
    </source>
</reference>
<reference key="3">
    <citation type="submission" date="2010-06" db="PDB data bank">
        <title>Solution NMR structure of the Thermotoga maritima protein TM0855.</title>
        <authorList>
            <person name="Serrano P."/>
            <person name="Jaudzems K."/>
            <person name="Horst R."/>
            <person name="Wilson I.A."/>
            <person name="Wuthrich K."/>
        </authorList>
    </citation>
    <scope>STRUCTURE BY NMR OF 1-105</scope>
    <scope>SUBUNIT</scope>
</reference>
<evidence type="ECO:0000255" key="1">
    <source>
        <dbReference type="HAMAP-Rule" id="MF_00003"/>
    </source>
</evidence>
<evidence type="ECO:0000305" key="2">
    <source ref="3"/>
</evidence>
<evidence type="ECO:0007829" key="3">
    <source>
        <dbReference type="PDB" id="2KZF"/>
    </source>
</evidence>
<sequence length="131" mass="15547">MNPAYRKAMLESEIQKLLMEALQQLRDPRLKKDFVTFSRVELSKDKRYADVYVSFLGTPEERKETVEILNRAKGFFRTFIAKNLRLYVAPEIRFYEDKGIEASVKVHQLLVQLGYDPLKDKEKKEEDKEEE</sequence>
<protein>
    <recommendedName>
        <fullName evidence="1">Ribosome-binding factor A</fullName>
    </recommendedName>
</protein>
<name>RBFA_THEMA</name>
<proteinExistence type="evidence at protein level"/>
<gene>
    <name evidence="1" type="primary">rbfA</name>
    <name type="ordered locus">TM_0855</name>
</gene>
<comment type="function">
    <text evidence="1">One of several proteins that assist in the late maturation steps of the functional core of the 30S ribosomal subunit. Associates with free 30S ribosomal subunits (but not with 30S subunits that are part of 70S ribosomes or polysomes). Required for efficient processing of 16S rRNA. May interact with the 5'-terminal helix region of 16S rRNA.</text>
</comment>
<comment type="subunit">
    <text evidence="1 2">Monomer (Ref.3). Binds 30S ribosomal subunits, but not 50S ribosomal subunits or 70S ribosomes.</text>
</comment>
<comment type="subcellular location">
    <subcellularLocation>
        <location evidence="1">Cytoplasm</location>
    </subcellularLocation>
</comment>
<comment type="similarity">
    <text evidence="1">Belongs to the RbfA family.</text>
</comment>
<feature type="chain" id="PRO_0000102758" description="Ribosome-binding factor A">
    <location>
        <begin position="1"/>
        <end position="131"/>
    </location>
</feature>
<feature type="turn" evidence="3">
    <location>
        <begin position="5"/>
        <end position="7"/>
    </location>
</feature>
<feature type="helix" evidence="3">
    <location>
        <begin position="8"/>
        <end position="23"/>
    </location>
</feature>
<feature type="helix" evidence="3">
    <location>
        <begin position="32"/>
        <end position="34"/>
    </location>
</feature>
<feature type="strand" evidence="3">
    <location>
        <begin position="37"/>
        <end position="42"/>
    </location>
</feature>
<feature type="strand" evidence="3">
    <location>
        <begin position="48"/>
        <end position="53"/>
    </location>
</feature>
<feature type="helix" evidence="3">
    <location>
        <begin position="59"/>
        <end position="83"/>
    </location>
</feature>
<feature type="strand" evidence="3">
    <location>
        <begin position="86"/>
        <end position="88"/>
    </location>
</feature>
<feature type="strand" evidence="3">
    <location>
        <begin position="91"/>
        <end position="97"/>
    </location>
</feature>
<accession>Q9WZV9</accession>